<protein>
    <recommendedName>
        <fullName evidence="9">As-peptide 126</fullName>
        <shortName evidence="5">As-126</shortName>
        <shortName evidence="9">As126</shortName>
    </recommendedName>
</protein>
<organism>
    <name type="scientific">Anoplius samariensis</name>
    <name type="common">Solitary wasp</name>
    <dbReference type="NCBI Taxonomy" id="200614"/>
    <lineage>
        <taxon>Eukaryota</taxon>
        <taxon>Metazoa</taxon>
        <taxon>Ecdysozoa</taxon>
        <taxon>Arthropoda</taxon>
        <taxon>Hexapoda</taxon>
        <taxon>Insecta</taxon>
        <taxon>Pterygota</taxon>
        <taxon>Neoptera</taxon>
        <taxon>Endopterygota</taxon>
        <taxon>Hymenoptera</taxon>
        <taxon>Apocrita</taxon>
        <taxon>Aculeata</taxon>
        <taxon>Pompiloidea</taxon>
        <taxon>Pompilidae</taxon>
        <taxon>Pompilinae</taxon>
        <taxon>Anoplius</taxon>
    </lineage>
</organism>
<dbReference type="EMBL" id="AB087727">
    <property type="protein sequence ID" value="BAF65255.1"/>
    <property type="molecule type" value="mRNA"/>
</dbReference>
<dbReference type="GO" id="GO:0005576">
    <property type="term" value="C:extracellular region"/>
    <property type="evidence" value="ECO:0007669"/>
    <property type="project" value="UniProtKB-SubCell"/>
</dbReference>
<name>AS126_ANOSM</name>
<accession>A6P331</accession>
<reference key="1">
    <citation type="submission" date="2002-07" db="EMBL/GenBank/DDBJ databases">
        <title>Cloning of alpha-pompilidotoxin and As126 cDNA in Anoplius samariensis.</title>
        <authorList>
            <person name="Hisada M."/>
            <person name="Kanda A."/>
            <person name="Kuroda K."/>
            <person name="Minakata H."/>
            <person name="Nakajima T."/>
        </authorList>
    </citation>
    <scope>NUCLEOTIDE SEQUENCE [MRNA]</scope>
</reference>
<reference key="2">
    <citation type="journal article" date="2002" name="Rapid Commun. Mass Spectrom.">
        <title>Sequencing wasp venom peptides by endopeptidase digestion and nested collision-induced dissociation/post-source decay methods.</title>
        <authorList>
            <person name="Hisada M."/>
            <person name="Konno K."/>
            <person name="Itagaki Y."/>
            <person name="Naoki H."/>
            <person name="Nakajima T."/>
        </authorList>
    </citation>
    <scope>PROTEIN SEQUENCE OF 105-113</scope>
    <scope>SUBCELLULAR LOCATION</scope>
    <scope>MASS SPECTROMETRY</scope>
    <scope>PYROGLUTAMATE FORMATION AT GLN-105</scope>
    <scope>AMIDATION AT LYS-113</scope>
    <source>
        <tissue>Venom</tissue>
    </source>
</reference>
<reference key="3">
    <citation type="journal article" date="2016" name="Toxins">
        <title>Peptide toxins in solitary wasp venoms.</title>
        <authorList>
            <person name="Konno K."/>
            <person name="Kazuma K."/>
            <person name="Nihei K."/>
        </authorList>
    </citation>
    <scope>REVIEW</scope>
</reference>
<evidence type="ECO:0000255" key="1"/>
<evidence type="ECO:0000256" key="2">
    <source>
        <dbReference type="SAM" id="MobiDB-lite"/>
    </source>
</evidence>
<evidence type="ECO:0000269" key="3">
    <source>
    </source>
</evidence>
<evidence type="ECO:0000269" key="4">
    <source ref="1"/>
</evidence>
<evidence type="ECO:0000303" key="5">
    <source>
    </source>
</evidence>
<evidence type="ECO:0000305" key="6"/>
<evidence type="ECO:0000305" key="7">
    <source>
    </source>
</evidence>
<evidence type="ECO:0000305" key="8">
    <source>
    </source>
</evidence>
<evidence type="ECO:0000312" key="9">
    <source>
        <dbReference type="EMBL" id="BAF65255.1"/>
    </source>
</evidence>
<proteinExistence type="evidence at protein level"/>
<keyword id="KW-0027">Amidation</keyword>
<keyword id="KW-0903">Direct protein sequencing</keyword>
<keyword id="KW-0873">Pyrrolidone carboxylic acid</keyword>
<keyword id="KW-0677">Repeat</keyword>
<keyword id="KW-0964">Secreted</keyword>
<keyword id="KW-0732">Signal</keyword>
<sequence>MSRALICSLALLAMLVISGTYASPAANAEALAAANAEASAAANAEPLAAANAEPLAAANAEPLAAANADPIAAANAEPSAAANAEPLAAANAEPSAGPSPLAAAQDPPVVKMKG</sequence>
<comment type="subcellular location">
    <subcellularLocation>
        <location evidence="3">Secreted</location>
    </subcellularLocation>
</comment>
<comment type="tissue specificity">
    <text evidence="7">Expressed by the venom gland.</text>
</comment>
<comment type="mass spectrometry"/>
<comment type="miscellaneous">
    <text evidence="8">Is a minor component of A.samariensis venom.</text>
</comment>
<feature type="signal peptide" evidence="1">
    <location>
        <begin position="1"/>
        <end position="22"/>
    </location>
</feature>
<feature type="propeptide" id="PRO_0000453649" evidence="6">
    <location>
        <begin position="23"/>
        <end position="104"/>
    </location>
</feature>
<feature type="peptide" id="PRO_5002697961" description="As-peptide 126" evidence="4">
    <location>
        <begin position="105"/>
        <end position="113"/>
    </location>
</feature>
<feature type="repeat" description="1" evidence="6">
    <location>
        <begin position="22"/>
        <end position="29"/>
    </location>
</feature>
<feature type="repeat" description="2" evidence="6">
    <location>
        <begin position="30"/>
        <end position="37"/>
    </location>
</feature>
<feature type="repeat" description="3" evidence="6">
    <location>
        <begin position="38"/>
        <end position="45"/>
    </location>
</feature>
<feature type="repeat" description="4" evidence="6">
    <location>
        <begin position="46"/>
        <end position="53"/>
    </location>
</feature>
<feature type="repeat" description="5" evidence="6">
    <location>
        <begin position="54"/>
        <end position="61"/>
    </location>
</feature>
<feature type="repeat" description="6" evidence="6">
    <location>
        <begin position="62"/>
        <end position="69"/>
    </location>
</feature>
<feature type="repeat" description="7" evidence="6">
    <location>
        <begin position="70"/>
        <end position="77"/>
    </location>
</feature>
<feature type="repeat" description="8" evidence="6">
    <location>
        <begin position="78"/>
        <end position="85"/>
    </location>
</feature>
<feature type="repeat" description="9" evidence="6">
    <location>
        <begin position="86"/>
        <end position="93"/>
    </location>
</feature>
<feature type="region of interest" description="9 X 8 AA approximate tandem repeats of [AP]-[ILS]-[AP]-A-A-N-A-[DE]" evidence="6">
    <location>
        <begin position="22"/>
        <end position="93"/>
    </location>
</feature>
<feature type="region of interest" description="Disordered" evidence="2">
    <location>
        <begin position="82"/>
        <end position="114"/>
    </location>
</feature>
<feature type="compositionally biased region" description="Low complexity" evidence="2">
    <location>
        <begin position="82"/>
        <end position="96"/>
    </location>
</feature>
<feature type="modified residue" description="Pyrrolidone carboxylic acid" evidence="3">
    <location>
        <position position="105"/>
    </location>
</feature>
<feature type="modified residue" description="Lysine amide" evidence="3">
    <location>
        <position position="113"/>
    </location>
</feature>